<organism>
    <name type="scientific">Bos taurus</name>
    <name type="common">Bovine</name>
    <dbReference type="NCBI Taxonomy" id="9913"/>
    <lineage>
        <taxon>Eukaryota</taxon>
        <taxon>Metazoa</taxon>
        <taxon>Chordata</taxon>
        <taxon>Craniata</taxon>
        <taxon>Vertebrata</taxon>
        <taxon>Euteleostomi</taxon>
        <taxon>Mammalia</taxon>
        <taxon>Eutheria</taxon>
        <taxon>Laurasiatheria</taxon>
        <taxon>Artiodactyla</taxon>
        <taxon>Ruminantia</taxon>
        <taxon>Pecora</taxon>
        <taxon>Bovidae</taxon>
        <taxon>Bovinae</taxon>
        <taxon>Bos</taxon>
    </lineage>
</organism>
<feature type="chain" id="PRO_0000239114" description="Flap endonuclease 1">
    <location>
        <begin position="1"/>
        <end position="380"/>
    </location>
</feature>
<feature type="region of interest" description="N-domain">
    <location>
        <begin position="1"/>
        <end position="104"/>
    </location>
</feature>
<feature type="region of interest" description="I-domain">
    <location>
        <begin position="122"/>
        <end position="253"/>
    </location>
</feature>
<feature type="region of interest" description="Disordered" evidence="3">
    <location>
        <begin position="327"/>
        <end position="380"/>
    </location>
</feature>
<feature type="region of interest" description="Interaction with PCNA" evidence="2">
    <location>
        <begin position="336"/>
        <end position="344"/>
    </location>
</feature>
<feature type="compositionally biased region" description="Basic residues" evidence="3">
    <location>
        <begin position="363"/>
        <end position="380"/>
    </location>
</feature>
<feature type="binding site" evidence="2">
    <location>
        <position position="34"/>
    </location>
    <ligand>
        <name>Mg(2+)</name>
        <dbReference type="ChEBI" id="CHEBI:18420"/>
        <label>1</label>
    </ligand>
</feature>
<feature type="binding site" evidence="2">
    <location>
        <position position="47"/>
    </location>
    <ligand>
        <name>DNA</name>
        <dbReference type="ChEBI" id="CHEBI:16991"/>
    </ligand>
</feature>
<feature type="binding site" evidence="2">
    <location>
        <position position="70"/>
    </location>
    <ligand>
        <name>DNA</name>
        <dbReference type="ChEBI" id="CHEBI:16991"/>
    </ligand>
</feature>
<feature type="binding site" evidence="2">
    <location>
        <position position="86"/>
    </location>
    <ligand>
        <name>Mg(2+)</name>
        <dbReference type="ChEBI" id="CHEBI:18420"/>
        <label>1</label>
    </ligand>
</feature>
<feature type="binding site" evidence="2">
    <location>
        <position position="158"/>
    </location>
    <ligand>
        <name>DNA</name>
        <dbReference type="ChEBI" id="CHEBI:16991"/>
    </ligand>
</feature>
<feature type="binding site" evidence="2">
    <location>
        <position position="158"/>
    </location>
    <ligand>
        <name>Mg(2+)</name>
        <dbReference type="ChEBI" id="CHEBI:18420"/>
        <label>1</label>
    </ligand>
</feature>
<feature type="binding site" evidence="2">
    <location>
        <position position="160"/>
    </location>
    <ligand>
        <name>Mg(2+)</name>
        <dbReference type="ChEBI" id="CHEBI:18420"/>
        <label>1</label>
    </ligand>
</feature>
<feature type="binding site" evidence="2">
    <location>
        <position position="179"/>
    </location>
    <ligand>
        <name>Mg(2+)</name>
        <dbReference type="ChEBI" id="CHEBI:18420"/>
        <label>2</label>
    </ligand>
</feature>
<feature type="binding site" evidence="2">
    <location>
        <position position="181"/>
    </location>
    <ligand>
        <name>Mg(2+)</name>
        <dbReference type="ChEBI" id="CHEBI:18420"/>
        <label>2</label>
    </ligand>
</feature>
<feature type="binding site" evidence="2">
    <location>
        <position position="231"/>
    </location>
    <ligand>
        <name>DNA</name>
        <dbReference type="ChEBI" id="CHEBI:16991"/>
    </ligand>
</feature>
<feature type="binding site" evidence="2">
    <location>
        <position position="233"/>
    </location>
    <ligand>
        <name>DNA</name>
        <dbReference type="ChEBI" id="CHEBI:16991"/>
    </ligand>
</feature>
<feature type="binding site" evidence="2">
    <location>
        <position position="233"/>
    </location>
    <ligand>
        <name>Mg(2+)</name>
        <dbReference type="ChEBI" id="CHEBI:18420"/>
        <label>2</label>
    </ligand>
</feature>
<feature type="modified residue" description="Symmetric dimethylarginine; by PRMT5" evidence="1 2">
    <location>
        <position position="19"/>
    </location>
</feature>
<feature type="modified residue" description="N6-acetyllysine" evidence="1 2">
    <location>
        <position position="80"/>
    </location>
</feature>
<feature type="modified residue" description="Symmetric dimethylarginine; by PRMT5" evidence="1 2">
    <location>
        <position position="100"/>
    </location>
</feature>
<feature type="modified residue" description="Symmetric dimethylarginine; by PRMT5" evidence="1 2">
    <location>
        <position position="104"/>
    </location>
</feature>
<feature type="modified residue" description="Phosphoserine; by CDK2" evidence="1 2">
    <location>
        <position position="187"/>
    </location>
</feature>
<feature type="modified residue" description="Symmetric dimethylarginine; by PRMT5" evidence="1 2">
    <location>
        <position position="192"/>
    </location>
</feature>
<feature type="modified residue" description="Phosphoserine" evidence="1">
    <location>
        <position position="197"/>
    </location>
</feature>
<feature type="modified residue" description="Phosphoserine" evidence="1">
    <location>
        <position position="255"/>
    </location>
</feature>
<feature type="modified residue" description="Phosphoserine" evidence="1">
    <location>
        <position position="293"/>
    </location>
</feature>
<feature type="modified residue" description="Phosphoserine" evidence="1">
    <location>
        <position position="335"/>
    </location>
</feature>
<feature type="modified residue" description="Phosphothreonine" evidence="1">
    <location>
        <position position="336"/>
    </location>
</feature>
<feature type="modified residue" description="N6-acetyllysine" evidence="1 2">
    <location>
        <position position="354"/>
    </location>
</feature>
<feature type="modified residue" description="N6-acetyllysine" evidence="1 2">
    <location>
        <position position="375"/>
    </location>
</feature>
<feature type="modified residue" description="N6-acetyllysine" evidence="1 2">
    <location>
        <position position="377"/>
    </location>
</feature>
<feature type="modified residue" description="N6-acetyllysine" evidence="1 2">
    <location>
        <position position="380"/>
    </location>
</feature>
<feature type="sequence conflict" description="In Ref. 1; AAX46374 and 2; AAI05256." evidence="7" ref="1 2">
    <original>V</original>
    <variation>M</variation>
    <location>
        <position position="247"/>
    </location>
</feature>
<feature type="sequence conflict" description="In Ref. 1; AAX46374." evidence="7" ref="1">
    <original>E</original>
    <variation>K</variation>
    <location>
        <position position="304"/>
    </location>
</feature>
<sequence>MGIQGLAKLIADVAPSAIRENDIKSYFGRKVAIDASMSIYQFLIAVRQGGDVLQNEEGETTSHLMGMFYRTIRMMENGIKPVYVFDGKPPQLKSGELAKRSERRAEAEKQLQEAQAAGAEAEVEKFTKRLVKVTKQHNDECKHLLSLMGIPYLDAPSEAEASCAALVKAGKVYAAATEDMDCLTFGSPVLMRHLTASEAKKLPIQEFHLSRILQELGLNQEQFVDLCILLGSDYCESIRGIGPKRAVDLIQKHKSIEEIVRRLDPNKYPVPENWLHKEAQQLFLEPEVLDPESVELKWSEPNEEELIKFMCGEKQFSEERIRSGVRRLSKSRQGSTQGRLDDFFKVTGSLSSAKRKEPEPKGAAKKKAKTGAAGKFKRGK</sequence>
<comment type="function">
    <text evidence="2 4 5 6">Structure-specific nuclease with 5'-flap endonuclease and 5'-3' exonuclease activities involved in DNA replication and repair. During DNA replication, cleaves the 5'-overhanging flap structure that is generated by displacement synthesis when DNA polymerase encounters the 5'-end of a downstream Okazaki fragment. It enters the flap from the 5'-end and then tracks to cleave the flap base, leaving a nick for ligation. Also involved in the long patch base excision repair (LP-BER) pathway, by cleaving within the apurinic/apyrimidinic (AP) site-terminated flap. Acts as a genome stabilization factor that prevents flaps from equilibrating into structures that lead to duplications and deletions. Also possesses 5'-3' exonuclease activity on nicked or gapped double-stranded DNA, and exhibits RNase H activity. Also involved in replication and repair of rDNA and in repairing mitochondrial DNA.</text>
</comment>
<comment type="cofactor">
    <cofactor evidence="2">
        <name>Mg(2+)</name>
        <dbReference type="ChEBI" id="CHEBI:18420"/>
    </cofactor>
    <text evidence="2">Binds 2 magnesium ions per subunit. They probably participate in the reaction catalyzed by the enzyme. May bind an additional third magnesium ion after substrate binding.</text>
</comment>
<comment type="subunit">
    <text evidence="1 2">Interacts with PCNA. Three molecules of FEN1 bind to one PCNA trimer with each molecule binding to one PCNA monomer. PCNA stimulates the nuclease activity without altering cleavage specificity. The C-terminal domain binds EP300; can bind simultaneously to both PCNA and EP300. Interacts with DDX11; this interaction is direct and increases flap endonuclease activity of FEN1. Interacts with WDR4; regulating its endonuclease activity. Interacts with POLB.</text>
</comment>
<comment type="subcellular location">
    <subcellularLocation>
        <location evidence="2">Nucleus</location>
        <location evidence="2">Nucleolus</location>
    </subcellularLocation>
    <subcellularLocation>
        <location evidence="2">Nucleus</location>
        <location evidence="2">Nucleoplasm</location>
    </subcellularLocation>
    <subcellularLocation>
        <location evidence="2">Mitochondrion</location>
    </subcellularLocation>
    <text evidence="2">Resides mostly in the nucleoli and relocalizes to the nucleoplasm upon DNA damage.</text>
</comment>
<comment type="PTM">
    <text evidence="2">Acetylated by EP300. Acetylation inhibits both endonuclease and exonuclease activity. Acetylation also reduces DNA-binding activity but does not affect interaction with PCNA or EP300.</text>
</comment>
<comment type="PTM">
    <text evidence="2">Phosphorylation upon DNA damage induces relocalization to the nuclear plasma. Phosphorylation at Ser-187 by CDK2 occurs during late S-phase and results in dissociation from PCNA.</text>
</comment>
<comment type="PTM">
    <text evidence="2">Methylation at Arg-192 by PRMT5 impedes Ser-187 phosphorylation and increases interaction with PCNA.</text>
</comment>
<comment type="similarity">
    <text evidence="2">Belongs to the XPG/RAD2 endonuclease family. FEN1 subfamily.</text>
</comment>
<reference key="1">
    <citation type="journal article" date="2005" name="BMC Genomics">
        <title>Characterization of 954 bovine full-CDS cDNA sequences.</title>
        <authorList>
            <person name="Harhay G.P."/>
            <person name="Sonstegard T.S."/>
            <person name="Keele J.W."/>
            <person name="Heaton M.P."/>
            <person name="Clawson M.L."/>
            <person name="Snelling W.M."/>
            <person name="Wiedmann R.T."/>
            <person name="Van Tassell C.P."/>
            <person name="Smith T.P.L."/>
        </authorList>
    </citation>
    <scope>NUCLEOTIDE SEQUENCE [LARGE SCALE MRNA]</scope>
</reference>
<reference key="2">
    <citation type="submission" date="2005-09" db="EMBL/GenBank/DDBJ databases">
        <authorList>
            <consortium name="NIH - Mammalian Gene Collection (MGC) project"/>
        </authorList>
    </citation>
    <scope>NUCLEOTIDE SEQUENCE [LARGE SCALE MRNA]</scope>
    <source>
        <strain>Hereford</strain>
        <tissue>Ascending colon</tissue>
    </source>
</reference>
<reference key="3">
    <citation type="journal article" date="1994" name="J. Biol. Chem.">
        <title>The calf 5'- to 3'-exonuclease is also an endonuclease with both activities dependent on primers annealed upstream of the point of cleavage.</title>
        <authorList>
            <person name="Murante R.S."/>
            <person name="Huang L."/>
            <person name="Turchi J.J."/>
            <person name="Bambara R.A."/>
        </authorList>
    </citation>
    <scope>FUNCTION</scope>
    <scope>ENDONUCLEASE AND EXONUCLEASE ACTIVITIES</scope>
</reference>
<reference key="4">
    <citation type="journal article" date="1995" name="J. Biol. Chem.">
        <title>Calf 5' to 3' exo/endonuclease must slide from a 5' end of the substrate to perform structure-specific cleavage.</title>
        <authorList>
            <person name="Murante R.S."/>
            <person name="Rust L."/>
            <person name="Bambara R.A."/>
        </authorList>
    </citation>
    <scope>FUNCTION</scope>
</reference>
<reference key="5">
    <citation type="journal article" date="1996" name="Biochemistry">
        <title>Role of calf RTH-1 nuclease in removal of 5'-ribonucleotides during Okazaki fragment processing.</title>
        <authorList>
            <person name="Huang L."/>
            <person name="Rumbaugh J.A."/>
            <person name="Murante R.S."/>
            <person name="Lin R.J."/>
            <person name="Rust L."/>
            <person name="Bambara R.A."/>
        </authorList>
    </citation>
    <scope>FUNCTION</scope>
</reference>
<evidence type="ECO:0000250" key="1">
    <source>
        <dbReference type="UniProtKB" id="P39748"/>
    </source>
</evidence>
<evidence type="ECO:0000255" key="2">
    <source>
        <dbReference type="HAMAP-Rule" id="MF_03140"/>
    </source>
</evidence>
<evidence type="ECO:0000256" key="3">
    <source>
        <dbReference type="SAM" id="MobiDB-lite"/>
    </source>
</evidence>
<evidence type="ECO:0000269" key="4">
    <source>
    </source>
</evidence>
<evidence type="ECO:0000269" key="5">
    <source>
    </source>
</evidence>
<evidence type="ECO:0000269" key="6">
    <source>
    </source>
</evidence>
<evidence type="ECO:0000305" key="7"/>
<proteinExistence type="evidence at transcript level"/>
<accession>Q58DH8</accession>
<accession>Q3MHF6</accession>
<accession>Q58DS0</accession>
<protein>
    <recommendedName>
        <fullName evidence="2">Flap endonuclease 1</fullName>
        <shortName evidence="2">FEN-1</shortName>
        <ecNumber evidence="2">3.1.-.-</ecNumber>
    </recommendedName>
    <alternativeName>
        <fullName evidence="2">Flap structure-specific endonuclease 1</fullName>
    </alternativeName>
</protein>
<name>FEN1_BOVIN</name>
<keyword id="KW-0007">Acetylation</keyword>
<keyword id="KW-0227">DNA damage</keyword>
<keyword id="KW-0234">DNA repair</keyword>
<keyword id="KW-0235">DNA replication</keyword>
<keyword id="KW-0255">Endonuclease</keyword>
<keyword id="KW-0269">Exonuclease</keyword>
<keyword id="KW-0378">Hydrolase</keyword>
<keyword id="KW-0460">Magnesium</keyword>
<keyword id="KW-0479">Metal-binding</keyword>
<keyword id="KW-0488">Methylation</keyword>
<keyword id="KW-0496">Mitochondrion</keyword>
<keyword id="KW-0540">Nuclease</keyword>
<keyword id="KW-0539">Nucleus</keyword>
<keyword id="KW-0597">Phosphoprotein</keyword>
<keyword id="KW-1185">Reference proteome</keyword>
<dbReference type="EC" id="3.1.-.-" evidence="2"/>
<dbReference type="EMBL" id="BT021527">
    <property type="protein sequence ID" value="AAX46374.1"/>
    <property type="molecule type" value="mRNA"/>
</dbReference>
<dbReference type="EMBL" id="BT021540">
    <property type="protein sequence ID" value="AAX46387.1"/>
    <property type="molecule type" value="mRNA"/>
</dbReference>
<dbReference type="EMBL" id="BT021619">
    <property type="protein sequence ID" value="AAX46466.1"/>
    <property type="molecule type" value="mRNA"/>
</dbReference>
<dbReference type="EMBL" id="BT021755">
    <property type="protein sequence ID" value="AAX46602.1"/>
    <property type="molecule type" value="mRNA"/>
</dbReference>
<dbReference type="EMBL" id="BC105255">
    <property type="protein sequence ID" value="AAI05256.1"/>
    <property type="molecule type" value="mRNA"/>
</dbReference>
<dbReference type="RefSeq" id="NP_001030285.1">
    <property type="nucleotide sequence ID" value="NM_001035113.1"/>
</dbReference>
<dbReference type="RefSeq" id="XP_059739017.1">
    <property type="nucleotide sequence ID" value="XM_059883034.1"/>
</dbReference>
<dbReference type="SMR" id="Q58DH8"/>
<dbReference type="FunCoup" id="Q58DH8">
    <property type="interactions" value="3624"/>
</dbReference>
<dbReference type="STRING" id="9913.ENSBTAP00000000071"/>
<dbReference type="PaxDb" id="9913-ENSBTAP00000000071"/>
<dbReference type="Ensembl" id="ENSBTAT00000000071.5">
    <property type="protein sequence ID" value="ENSBTAP00000000071.3"/>
    <property type="gene ID" value="ENSBTAG00000000064.5"/>
</dbReference>
<dbReference type="GeneID" id="616242"/>
<dbReference type="KEGG" id="bta:616242"/>
<dbReference type="CTD" id="2237"/>
<dbReference type="VEuPathDB" id="HostDB:ENSBTAG00000000064"/>
<dbReference type="VGNC" id="VGNC:28947">
    <property type="gene designation" value="FEN1"/>
</dbReference>
<dbReference type="eggNOG" id="KOG2519">
    <property type="taxonomic scope" value="Eukaryota"/>
</dbReference>
<dbReference type="GeneTree" id="ENSGT00940000155807"/>
<dbReference type="HOGENOM" id="CLU_032444_2_0_1"/>
<dbReference type="InParanoid" id="Q58DH8"/>
<dbReference type="OMA" id="MGIPWVQ"/>
<dbReference type="OrthoDB" id="1937206at2759"/>
<dbReference type="TreeFam" id="TF105701"/>
<dbReference type="Reactome" id="R-BTA-110362">
    <property type="pathway name" value="POLB-Dependent Long Patch Base Excision Repair"/>
</dbReference>
<dbReference type="Reactome" id="R-BTA-174437">
    <property type="pathway name" value="Removal of the Flap Intermediate from the C-strand"/>
</dbReference>
<dbReference type="Reactome" id="R-BTA-5651801">
    <property type="pathway name" value="PCNA-Dependent Long Patch Base Excision Repair"/>
</dbReference>
<dbReference type="Reactome" id="R-BTA-5685939">
    <property type="pathway name" value="HDR through MMEJ (alt-NHEJ)"/>
</dbReference>
<dbReference type="Reactome" id="R-BTA-69166">
    <property type="pathway name" value="Removal of the Flap Intermediate"/>
</dbReference>
<dbReference type="Proteomes" id="UP000009136">
    <property type="component" value="Chromosome 29"/>
</dbReference>
<dbReference type="Bgee" id="ENSBTAG00000000064">
    <property type="expression patterns" value="Expressed in nasopharynx and 106 other cell types or tissues"/>
</dbReference>
<dbReference type="GO" id="GO:0000781">
    <property type="term" value="C:chromosome, telomeric region"/>
    <property type="evidence" value="ECO:0007669"/>
    <property type="project" value="Ensembl"/>
</dbReference>
<dbReference type="GO" id="GO:0005739">
    <property type="term" value="C:mitochondrion"/>
    <property type="evidence" value="ECO:0007669"/>
    <property type="project" value="UniProtKB-SubCell"/>
</dbReference>
<dbReference type="GO" id="GO:0005730">
    <property type="term" value="C:nucleolus"/>
    <property type="evidence" value="ECO:0007669"/>
    <property type="project" value="UniProtKB-SubCell"/>
</dbReference>
<dbReference type="GO" id="GO:0005654">
    <property type="term" value="C:nucleoplasm"/>
    <property type="evidence" value="ECO:0007669"/>
    <property type="project" value="UniProtKB-SubCell"/>
</dbReference>
<dbReference type="GO" id="GO:0005634">
    <property type="term" value="C:nucleus"/>
    <property type="evidence" value="ECO:0000250"/>
    <property type="project" value="UniProtKB"/>
</dbReference>
<dbReference type="GO" id="GO:0032991">
    <property type="term" value="C:protein-containing complex"/>
    <property type="evidence" value="ECO:0007669"/>
    <property type="project" value="Ensembl"/>
</dbReference>
<dbReference type="GO" id="GO:0008409">
    <property type="term" value="F:5'-3' exonuclease activity"/>
    <property type="evidence" value="ECO:0000318"/>
    <property type="project" value="GO_Central"/>
</dbReference>
<dbReference type="GO" id="GO:0017108">
    <property type="term" value="F:5'-flap endonuclease activity"/>
    <property type="evidence" value="ECO:0000318"/>
    <property type="project" value="GO_Central"/>
</dbReference>
<dbReference type="GO" id="GO:0003677">
    <property type="term" value="F:DNA binding"/>
    <property type="evidence" value="ECO:0007669"/>
    <property type="project" value="UniProtKB-UniRule"/>
</dbReference>
<dbReference type="GO" id="GO:0000287">
    <property type="term" value="F:magnesium ion binding"/>
    <property type="evidence" value="ECO:0000318"/>
    <property type="project" value="GO_Central"/>
</dbReference>
<dbReference type="GO" id="GO:0030145">
    <property type="term" value="F:manganese ion binding"/>
    <property type="evidence" value="ECO:0000318"/>
    <property type="project" value="GO_Central"/>
</dbReference>
<dbReference type="GO" id="GO:0004523">
    <property type="term" value="F:RNA-DNA hybrid ribonuclease activity"/>
    <property type="evidence" value="ECO:0000318"/>
    <property type="project" value="GO_Central"/>
</dbReference>
<dbReference type="GO" id="GO:0006284">
    <property type="term" value="P:base-excision repair"/>
    <property type="evidence" value="ECO:0007669"/>
    <property type="project" value="UniProtKB-UniRule"/>
</dbReference>
<dbReference type="GO" id="GO:0043137">
    <property type="term" value="P:DNA replication, removal of RNA primer"/>
    <property type="evidence" value="ECO:0007669"/>
    <property type="project" value="UniProtKB-UniRule"/>
</dbReference>
<dbReference type="GO" id="GO:0045876">
    <property type="term" value="P:positive regulation of sister chromatid cohesion"/>
    <property type="evidence" value="ECO:0007669"/>
    <property type="project" value="Ensembl"/>
</dbReference>
<dbReference type="CDD" id="cd09907">
    <property type="entry name" value="H3TH_FEN1-Euk"/>
    <property type="match status" value="1"/>
</dbReference>
<dbReference type="CDD" id="cd09867">
    <property type="entry name" value="PIN_FEN1"/>
    <property type="match status" value="1"/>
</dbReference>
<dbReference type="FunFam" id="1.10.150.20:FF:000009">
    <property type="entry name" value="Flap endonuclease 1"/>
    <property type="match status" value="1"/>
</dbReference>
<dbReference type="FunFam" id="3.40.50.1010:FF:000003">
    <property type="entry name" value="Flap endonuclease 1"/>
    <property type="match status" value="1"/>
</dbReference>
<dbReference type="Gene3D" id="1.10.150.20">
    <property type="entry name" value="5' to 3' exonuclease, C-terminal subdomain"/>
    <property type="match status" value="1"/>
</dbReference>
<dbReference type="Gene3D" id="3.40.50.1010">
    <property type="entry name" value="5'-nuclease"/>
    <property type="match status" value="1"/>
</dbReference>
<dbReference type="HAMAP" id="MF_00614">
    <property type="entry name" value="Fen"/>
    <property type="match status" value="1"/>
</dbReference>
<dbReference type="InterPro" id="IPR036279">
    <property type="entry name" value="5-3_exonuclease_C_sf"/>
</dbReference>
<dbReference type="InterPro" id="IPR023426">
    <property type="entry name" value="Flap_endonuc"/>
</dbReference>
<dbReference type="InterPro" id="IPR008918">
    <property type="entry name" value="HhH2"/>
</dbReference>
<dbReference type="InterPro" id="IPR029060">
    <property type="entry name" value="PIN-like_dom_sf"/>
</dbReference>
<dbReference type="InterPro" id="IPR006086">
    <property type="entry name" value="XPG-I_dom"/>
</dbReference>
<dbReference type="InterPro" id="IPR006084">
    <property type="entry name" value="XPG/Rad2"/>
</dbReference>
<dbReference type="InterPro" id="IPR019974">
    <property type="entry name" value="XPG_CS"/>
</dbReference>
<dbReference type="InterPro" id="IPR006085">
    <property type="entry name" value="XPG_DNA_repair_N"/>
</dbReference>
<dbReference type="PANTHER" id="PTHR11081:SF9">
    <property type="entry name" value="FLAP ENDONUCLEASE 1"/>
    <property type="match status" value="1"/>
</dbReference>
<dbReference type="PANTHER" id="PTHR11081">
    <property type="entry name" value="FLAP ENDONUCLEASE FAMILY MEMBER"/>
    <property type="match status" value="1"/>
</dbReference>
<dbReference type="Pfam" id="PF00867">
    <property type="entry name" value="XPG_I"/>
    <property type="match status" value="1"/>
</dbReference>
<dbReference type="Pfam" id="PF00752">
    <property type="entry name" value="XPG_N"/>
    <property type="match status" value="1"/>
</dbReference>
<dbReference type="PRINTS" id="PR00853">
    <property type="entry name" value="XPGRADSUPER"/>
</dbReference>
<dbReference type="SMART" id="SM00279">
    <property type="entry name" value="HhH2"/>
    <property type="match status" value="1"/>
</dbReference>
<dbReference type="SMART" id="SM00484">
    <property type="entry name" value="XPGI"/>
    <property type="match status" value="1"/>
</dbReference>
<dbReference type="SMART" id="SM00485">
    <property type="entry name" value="XPGN"/>
    <property type="match status" value="1"/>
</dbReference>
<dbReference type="SUPFAM" id="SSF47807">
    <property type="entry name" value="5' to 3' exonuclease, C-terminal subdomain"/>
    <property type="match status" value="1"/>
</dbReference>
<dbReference type="SUPFAM" id="SSF88723">
    <property type="entry name" value="PIN domain-like"/>
    <property type="match status" value="1"/>
</dbReference>
<dbReference type="PROSITE" id="PS00841">
    <property type="entry name" value="XPG_1"/>
    <property type="match status" value="1"/>
</dbReference>
<dbReference type="PROSITE" id="PS00842">
    <property type="entry name" value="XPG_2"/>
    <property type="match status" value="1"/>
</dbReference>
<gene>
    <name evidence="2" type="primary">FEN1</name>
    <name type="synonym">RTH-1</name>
</gene>